<keyword id="KW-0067">ATP-binding</keyword>
<keyword id="KW-0963">Cytoplasm</keyword>
<keyword id="KW-0347">Helicase</keyword>
<keyword id="KW-0378">Hydrolase</keyword>
<keyword id="KW-0396">Initiation factor</keyword>
<keyword id="KW-0547">Nucleotide-binding</keyword>
<keyword id="KW-0648">Protein biosynthesis</keyword>
<keyword id="KW-1185">Reference proteome</keyword>
<keyword id="KW-0694">RNA-binding</keyword>
<protein>
    <recommendedName>
        <fullName>ATP-dependent RNA helicase eIF4A</fullName>
        <ecNumber>3.6.4.13</ecNumber>
    </recommendedName>
    <alternativeName>
        <fullName>Eukaryotic initiation factor 4A</fullName>
        <shortName>eIF-4A</shortName>
    </alternativeName>
    <alternativeName>
        <fullName>Translation initiation factor 1</fullName>
    </alternativeName>
</protein>
<organism>
    <name type="scientific">Sclerotinia sclerotiorum (strain ATCC 18683 / 1980 / Ss-1)</name>
    <name type="common">White mold</name>
    <name type="synonym">Whetzelinia sclerotiorum</name>
    <dbReference type="NCBI Taxonomy" id="665079"/>
    <lineage>
        <taxon>Eukaryota</taxon>
        <taxon>Fungi</taxon>
        <taxon>Dikarya</taxon>
        <taxon>Ascomycota</taxon>
        <taxon>Pezizomycotina</taxon>
        <taxon>Leotiomycetes</taxon>
        <taxon>Helotiales</taxon>
        <taxon>Sclerotiniaceae</taxon>
        <taxon>Sclerotinia</taxon>
    </lineage>
</organism>
<name>IF4A_SCLS1</name>
<reference key="1">
    <citation type="journal article" date="2011" name="PLoS Genet.">
        <title>Genomic analysis of the necrotrophic fungal pathogens Sclerotinia sclerotiorum and Botrytis cinerea.</title>
        <authorList>
            <person name="Amselem J."/>
            <person name="Cuomo C.A."/>
            <person name="van Kan J.A.L."/>
            <person name="Viaud M."/>
            <person name="Benito E.P."/>
            <person name="Couloux A."/>
            <person name="Coutinho P.M."/>
            <person name="de Vries R.P."/>
            <person name="Dyer P.S."/>
            <person name="Fillinger S."/>
            <person name="Fournier E."/>
            <person name="Gout L."/>
            <person name="Hahn M."/>
            <person name="Kohn L."/>
            <person name="Lapalu N."/>
            <person name="Plummer K.M."/>
            <person name="Pradier J.-M."/>
            <person name="Quevillon E."/>
            <person name="Sharon A."/>
            <person name="Simon A."/>
            <person name="ten Have A."/>
            <person name="Tudzynski B."/>
            <person name="Tudzynski P."/>
            <person name="Wincker P."/>
            <person name="Andrew M."/>
            <person name="Anthouard V."/>
            <person name="Beever R.E."/>
            <person name="Beffa R."/>
            <person name="Benoit I."/>
            <person name="Bouzid O."/>
            <person name="Brault B."/>
            <person name="Chen Z."/>
            <person name="Choquer M."/>
            <person name="Collemare J."/>
            <person name="Cotton P."/>
            <person name="Danchin E.G."/>
            <person name="Da Silva C."/>
            <person name="Gautier A."/>
            <person name="Giraud C."/>
            <person name="Giraud T."/>
            <person name="Gonzalez C."/>
            <person name="Grossetete S."/>
            <person name="Gueldener U."/>
            <person name="Henrissat B."/>
            <person name="Howlett B.J."/>
            <person name="Kodira C."/>
            <person name="Kretschmer M."/>
            <person name="Lappartient A."/>
            <person name="Leroch M."/>
            <person name="Levis C."/>
            <person name="Mauceli E."/>
            <person name="Neuveglise C."/>
            <person name="Oeser B."/>
            <person name="Pearson M."/>
            <person name="Poulain J."/>
            <person name="Poussereau N."/>
            <person name="Quesneville H."/>
            <person name="Rascle C."/>
            <person name="Schumacher J."/>
            <person name="Segurens B."/>
            <person name="Sexton A."/>
            <person name="Silva E."/>
            <person name="Sirven C."/>
            <person name="Soanes D.M."/>
            <person name="Talbot N.J."/>
            <person name="Templeton M."/>
            <person name="Yandava C."/>
            <person name="Yarden O."/>
            <person name="Zeng Q."/>
            <person name="Rollins J.A."/>
            <person name="Lebrun M.-H."/>
            <person name="Dickman M."/>
        </authorList>
    </citation>
    <scope>NUCLEOTIDE SEQUENCE [LARGE SCALE GENOMIC DNA]</scope>
    <source>
        <strain>ATCC 18683 / 1980 / Ss-1</strain>
    </source>
</reference>
<feature type="chain" id="PRO_0000310172" description="ATP-dependent RNA helicase eIF4A">
    <location>
        <begin position="1"/>
        <end position="398"/>
    </location>
</feature>
<feature type="domain" description="Helicase ATP-binding" evidence="2">
    <location>
        <begin position="56"/>
        <end position="226"/>
    </location>
</feature>
<feature type="domain" description="Helicase C-terminal" evidence="3">
    <location>
        <begin position="237"/>
        <end position="398"/>
    </location>
</feature>
<feature type="short sequence motif" description="Q motif">
    <location>
        <begin position="25"/>
        <end position="53"/>
    </location>
</feature>
<feature type="short sequence motif" description="DEAD box">
    <location>
        <begin position="174"/>
        <end position="177"/>
    </location>
</feature>
<feature type="binding site" evidence="2">
    <location>
        <begin position="69"/>
        <end position="76"/>
    </location>
    <ligand>
        <name>ATP</name>
        <dbReference type="ChEBI" id="CHEBI:30616"/>
    </ligand>
</feature>
<proteinExistence type="inferred from homology"/>
<gene>
    <name type="primary">tif1</name>
    <name type="synonym">tif41</name>
    <name type="ORF">SS1G_04459</name>
</gene>
<dbReference type="EC" id="3.6.4.13"/>
<dbReference type="EMBL" id="CH476625">
    <property type="protein sequence ID" value="EDO01983.1"/>
    <property type="molecule type" value="Genomic_DNA"/>
</dbReference>
<dbReference type="RefSeq" id="XP_001594651.1">
    <property type="nucleotide sequence ID" value="XM_001594601.1"/>
</dbReference>
<dbReference type="SMR" id="A7EGL7"/>
<dbReference type="FunCoup" id="A7EGL7">
    <property type="interactions" value="1174"/>
</dbReference>
<dbReference type="STRING" id="665079.A7EGL7"/>
<dbReference type="EnsemblFungi" id="EDO01983">
    <property type="protein sequence ID" value="EDO01983"/>
    <property type="gene ID" value="SS1G_04459"/>
</dbReference>
<dbReference type="GeneID" id="5490824"/>
<dbReference type="KEGG" id="ssl:SS1G_04459"/>
<dbReference type="VEuPathDB" id="FungiDB:sscle_02g016630"/>
<dbReference type="eggNOG" id="KOG0327">
    <property type="taxonomic scope" value="Eukaryota"/>
</dbReference>
<dbReference type="HOGENOM" id="CLU_003041_1_0_1"/>
<dbReference type="InParanoid" id="A7EGL7"/>
<dbReference type="OMA" id="FGCQALV"/>
<dbReference type="OrthoDB" id="10265785at2759"/>
<dbReference type="Proteomes" id="UP000001312">
    <property type="component" value="Unassembled WGS sequence"/>
</dbReference>
<dbReference type="GO" id="GO:0010494">
    <property type="term" value="C:cytoplasmic stress granule"/>
    <property type="evidence" value="ECO:0000318"/>
    <property type="project" value="GO_Central"/>
</dbReference>
<dbReference type="GO" id="GO:0005524">
    <property type="term" value="F:ATP binding"/>
    <property type="evidence" value="ECO:0007669"/>
    <property type="project" value="UniProtKB-KW"/>
</dbReference>
<dbReference type="GO" id="GO:0016887">
    <property type="term" value="F:ATP hydrolysis activity"/>
    <property type="evidence" value="ECO:0007669"/>
    <property type="project" value="RHEA"/>
</dbReference>
<dbReference type="GO" id="GO:0003723">
    <property type="term" value="F:RNA binding"/>
    <property type="evidence" value="ECO:0007669"/>
    <property type="project" value="UniProtKB-KW"/>
</dbReference>
<dbReference type="GO" id="GO:0003724">
    <property type="term" value="F:RNA helicase activity"/>
    <property type="evidence" value="ECO:0007669"/>
    <property type="project" value="UniProtKB-EC"/>
</dbReference>
<dbReference type="GO" id="GO:0003743">
    <property type="term" value="F:translation initiation factor activity"/>
    <property type="evidence" value="ECO:0000318"/>
    <property type="project" value="GO_Central"/>
</dbReference>
<dbReference type="GO" id="GO:0002183">
    <property type="term" value="P:cytoplasmic translational initiation"/>
    <property type="evidence" value="ECO:0000318"/>
    <property type="project" value="GO_Central"/>
</dbReference>
<dbReference type="CDD" id="cd18046">
    <property type="entry name" value="DEADc_EIF4AII_EIF4AI_DDX2"/>
    <property type="match status" value="1"/>
</dbReference>
<dbReference type="CDD" id="cd18787">
    <property type="entry name" value="SF2_C_DEAD"/>
    <property type="match status" value="1"/>
</dbReference>
<dbReference type="FunFam" id="3.40.50.300:FF:000089">
    <property type="entry name" value="Eukaryotic initiation factor 4A-II"/>
    <property type="match status" value="1"/>
</dbReference>
<dbReference type="FunFam" id="3.40.50.300:FF:000031">
    <property type="entry name" value="Eukaryotic initiation factor 4A-III"/>
    <property type="match status" value="1"/>
</dbReference>
<dbReference type="Gene3D" id="3.40.50.300">
    <property type="entry name" value="P-loop containing nucleotide triphosphate hydrolases"/>
    <property type="match status" value="2"/>
</dbReference>
<dbReference type="InterPro" id="IPR011545">
    <property type="entry name" value="DEAD/DEAH_box_helicase_dom"/>
</dbReference>
<dbReference type="InterPro" id="IPR044728">
    <property type="entry name" value="EIF4A_DEADc"/>
</dbReference>
<dbReference type="InterPro" id="IPR014001">
    <property type="entry name" value="Helicase_ATP-bd"/>
</dbReference>
<dbReference type="InterPro" id="IPR001650">
    <property type="entry name" value="Helicase_C-like"/>
</dbReference>
<dbReference type="InterPro" id="IPR027417">
    <property type="entry name" value="P-loop_NTPase"/>
</dbReference>
<dbReference type="InterPro" id="IPR000629">
    <property type="entry name" value="RNA-helicase_DEAD-box_CS"/>
</dbReference>
<dbReference type="InterPro" id="IPR014014">
    <property type="entry name" value="RNA_helicase_DEAD_Q_motif"/>
</dbReference>
<dbReference type="PANTHER" id="PTHR47958">
    <property type="entry name" value="ATP-DEPENDENT RNA HELICASE DBP3"/>
    <property type="match status" value="1"/>
</dbReference>
<dbReference type="Pfam" id="PF00270">
    <property type="entry name" value="DEAD"/>
    <property type="match status" value="1"/>
</dbReference>
<dbReference type="Pfam" id="PF00271">
    <property type="entry name" value="Helicase_C"/>
    <property type="match status" value="1"/>
</dbReference>
<dbReference type="SMART" id="SM00487">
    <property type="entry name" value="DEXDc"/>
    <property type="match status" value="1"/>
</dbReference>
<dbReference type="SMART" id="SM00490">
    <property type="entry name" value="HELICc"/>
    <property type="match status" value="1"/>
</dbReference>
<dbReference type="SUPFAM" id="SSF52540">
    <property type="entry name" value="P-loop containing nucleoside triphosphate hydrolases"/>
    <property type="match status" value="1"/>
</dbReference>
<dbReference type="PROSITE" id="PS00039">
    <property type="entry name" value="DEAD_ATP_HELICASE"/>
    <property type="match status" value="1"/>
</dbReference>
<dbReference type="PROSITE" id="PS51192">
    <property type="entry name" value="HELICASE_ATP_BIND_1"/>
    <property type="match status" value="1"/>
</dbReference>
<dbReference type="PROSITE" id="PS51194">
    <property type="entry name" value="HELICASE_CTER"/>
    <property type="match status" value="1"/>
</dbReference>
<dbReference type="PROSITE" id="PS51195">
    <property type="entry name" value="Q_MOTIF"/>
    <property type="match status" value="1"/>
</dbReference>
<evidence type="ECO:0000250" key="1"/>
<evidence type="ECO:0000255" key="2">
    <source>
        <dbReference type="PROSITE-ProRule" id="PRU00541"/>
    </source>
</evidence>
<evidence type="ECO:0000255" key="3">
    <source>
        <dbReference type="PROSITE-ProRule" id="PRU00542"/>
    </source>
</evidence>
<evidence type="ECO:0000305" key="4"/>
<sequence length="398" mass="44889">MASADKGLEEIQEGQIESNYDETVDSFDTMNLKPELLRGVYAYGFERPSAIQQRAIMPVIKGHDVIAQAQSGTGKTATFSISVLQKLDPNVKQCQALILAPTRELAQQIQKVVVAIGDFMNVECHACIGGTSVRDDMKALQDGPQVVVGTPGRVHDMIQRRFLKTDSMKMFVLDEADEMLSRGFTEQIYDIFQLLPQSTQVVLLSATMPQDVLEVTTKFMRDPVRILVKKAELTLEGIKQFYIAVEKEDWKLDTLSDLYETVTITQAVIFCNTRRKVDWLTDKLTARDFTVSAMHGDMDQGQRDLIMKEFRSGSSRVLIATDLLARGIDVQQVSLVINYDLPANRENYIHRIGRGGRFGRKGVAINFVTAEDVRMMREIEQFYSTQIEEMPMNVADLI</sequence>
<comment type="function">
    <text evidence="1">ATP-dependent RNA helicase which is a subunit of the eIF4F complex involved in cap recognition and is required for mRNA binding to ribosome. In the current model of translation initiation, eIF4A unwinds RNA secondary structures in the 5'-UTR of mRNAs which is necessary to allow efficient binding of the small ribosomal subunit, and subsequent scanning for the initiator codon (By similarity).</text>
</comment>
<comment type="catalytic activity">
    <reaction>
        <text>ATP + H2O = ADP + phosphate + H(+)</text>
        <dbReference type="Rhea" id="RHEA:13065"/>
        <dbReference type="ChEBI" id="CHEBI:15377"/>
        <dbReference type="ChEBI" id="CHEBI:15378"/>
        <dbReference type="ChEBI" id="CHEBI:30616"/>
        <dbReference type="ChEBI" id="CHEBI:43474"/>
        <dbReference type="ChEBI" id="CHEBI:456216"/>
        <dbReference type="EC" id="3.6.4.13"/>
    </reaction>
</comment>
<comment type="subunit">
    <text evidence="1">Component of the eIF4F complex, which composition varies with external and internal environmental conditions. It is composed of at least eIF4A, eIF4E and eIF4G (By similarity).</text>
</comment>
<comment type="subcellular location">
    <subcellularLocation>
        <location evidence="1">Cytoplasm</location>
    </subcellularLocation>
</comment>
<comment type="domain">
    <text>The Q motif is unique to and characteristic of the DEAD box family of RNA helicases and controls ATP binding and hydrolysis.</text>
</comment>
<comment type="similarity">
    <text evidence="4">Belongs to the DEAD box helicase family. eIF4A subfamily.</text>
</comment>
<accession>A7EGL7</accession>